<protein>
    <recommendedName>
        <fullName evidence="1">DNA-directed RNA polymerase subunit beta'</fullName>
        <shortName evidence="1">RNAP subunit beta'</shortName>
        <ecNumber evidence="1">2.7.7.6</ecNumber>
    </recommendedName>
    <alternativeName>
        <fullName evidence="1">RNA polymerase subunit beta'</fullName>
    </alternativeName>
    <alternativeName>
        <fullName evidence="1">Transcriptase subunit beta'</fullName>
    </alternativeName>
</protein>
<proteinExistence type="evidence at protein level"/>
<name>RPOC_PORGI</name>
<feature type="chain" id="PRO_0000067776" description="DNA-directed RNA polymerase subunit beta'">
    <location>
        <begin position="1"/>
        <end position="1433"/>
    </location>
</feature>
<feature type="binding site" evidence="1">
    <location>
        <position position="66"/>
    </location>
    <ligand>
        <name>Zn(2+)</name>
        <dbReference type="ChEBI" id="CHEBI:29105"/>
        <label>1</label>
    </ligand>
</feature>
<feature type="binding site" evidence="1">
    <location>
        <position position="68"/>
    </location>
    <ligand>
        <name>Zn(2+)</name>
        <dbReference type="ChEBI" id="CHEBI:29105"/>
        <label>1</label>
    </ligand>
</feature>
<feature type="binding site" evidence="1">
    <location>
        <position position="81"/>
    </location>
    <ligand>
        <name>Zn(2+)</name>
        <dbReference type="ChEBI" id="CHEBI:29105"/>
        <label>1</label>
    </ligand>
</feature>
<feature type="binding site" evidence="1">
    <location>
        <position position="84"/>
    </location>
    <ligand>
        <name>Zn(2+)</name>
        <dbReference type="ChEBI" id="CHEBI:29105"/>
        <label>1</label>
    </ligand>
</feature>
<feature type="binding site" evidence="1">
    <location>
        <position position="473"/>
    </location>
    <ligand>
        <name>Mg(2+)</name>
        <dbReference type="ChEBI" id="CHEBI:18420"/>
    </ligand>
</feature>
<feature type="binding site" evidence="1">
    <location>
        <position position="475"/>
    </location>
    <ligand>
        <name>Mg(2+)</name>
        <dbReference type="ChEBI" id="CHEBI:18420"/>
    </ligand>
</feature>
<feature type="binding site" evidence="1">
    <location>
        <position position="477"/>
    </location>
    <ligand>
        <name>Mg(2+)</name>
        <dbReference type="ChEBI" id="CHEBI:18420"/>
    </ligand>
</feature>
<feature type="binding site" evidence="1">
    <location>
        <position position="815"/>
    </location>
    <ligand>
        <name>Zn(2+)</name>
        <dbReference type="ChEBI" id="CHEBI:29105"/>
        <label>2</label>
    </ligand>
</feature>
<feature type="binding site" evidence="1">
    <location>
        <position position="889"/>
    </location>
    <ligand>
        <name>Zn(2+)</name>
        <dbReference type="ChEBI" id="CHEBI:29105"/>
        <label>2</label>
    </ligand>
</feature>
<feature type="binding site" evidence="1">
    <location>
        <position position="896"/>
    </location>
    <ligand>
        <name>Zn(2+)</name>
        <dbReference type="ChEBI" id="CHEBI:29105"/>
        <label>2</label>
    </ligand>
</feature>
<feature type="binding site" evidence="1">
    <location>
        <position position="899"/>
    </location>
    <ligand>
        <name>Zn(2+)</name>
        <dbReference type="ChEBI" id="CHEBI:29105"/>
        <label>2</label>
    </ligand>
</feature>
<feature type="turn" evidence="2">
    <location>
        <begin position="23"/>
        <end position="27"/>
    </location>
</feature>
<feature type="strand" evidence="2">
    <location>
        <begin position="28"/>
        <end position="33"/>
    </location>
</feature>
<feature type="turn" evidence="2">
    <location>
        <begin position="42"/>
        <end position="44"/>
    </location>
</feature>
<feature type="strand" evidence="2">
    <location>
        <begin position="51"/>
        <end position="53"/>
    </location>
</feature>
<feature type="helix" evidence="2">
    <location>
        <begin position="55"/>
        <end position="58"/>
    </location>
</feature>
<feature type="helix" evidence="2">
    <location>
        <begin position="74"/>
        <end position="76"/>
    </location>
</feature>
<feature type="strand" evidence="2">
    <location>
        <begin position="82"/>
        <end position="84"/>
    </location>
</feature>
<feature type="helix" evidence="2">
    <location>
        <begin position="91"/>
        <end position="95"/>
    </location>
</feature>
<feature type="strand" evidence="2">
    <location>
        <begin position="98"/>
        <end position="102"/>
    </location>
</feature>
<feature type="helix" evidence="2">
    <location>
        <begin position="110"/>
        <end position="114"/>
    </location>
</feature>
<feature type="helix" evidence="2">
    <location>
        <begin position="119"/>
        <end position="124"/>
    </location>
</feature>
<feature type="helix" evidence="2">
    <location>
        <begin position="128"/>
        <end position="135"/>
    </location>
</feature>
<feature type="strand" evidence="2">
    <location>
        <begin position="141"/>
        <end position="143"/>
    </location>
</feature>
<feature type="helix" evidence="2">
    <location>
        <begin position="161"/>
        <end position="169"/>
    </location>
</feature>
<feature type="turn" evidence="2">
    <location>
        <begin position="176"/>
        <end position="178"/>
    </location>
</feature>
<feature type="helix" evidence="2">
    <location>
        <begin position="193"/>
        <end position="201"/>
    </location>
</feature>
<feature type="helix" evidence="2">
    <location>
        <begin position="206"/>
        <end position="218"/>
    </location>
</feature>
<feature type="helix" evidence="2">
    <location>
        <begin position="223"/>
        <end position="240"/>
    </location>
</feature>
<feature type="helix" evidence="2">
    <location>
        <begin position="247"/>
        <end position="250"/>
    </location>
</feature>
<feature type="strand" evidence="2">
    <location>
        <begin position="253"/>
        <end position="257"/>
    </location>
</feature>
<feature type="helix" evidence="2">
    <location>
        <begin position="260"/>
        <end position="262"/>
    </location>
</feature>
<feature type="strand" evidence="2">
    <location>
        <begin position="266"/>
        <end position="268"/>
    </location>
</feature>
<feature type="turn" evidence="2">
    <location>
        <begin position="269"/>
        <end position="271"/>
    </location>
</feature>
<feature type="strand" evidence="2">
    <location>
        <begin position="272"/>
        <end position="274"/>
    </location>
</feature>
<feature type="helix" evidence="2">
    <location>
        <begin position="277"/>
        <end position="296"/>
    </location>
</feature>
<feature type="helix" evidence="2">
    <location>
        <begin position="302"/>
        <end position="320"/>
    </location>
</feature>
<feature type="strand" evidence="2">
    <location>
        <begin position="323"/>
        <end position="325"/>
    </location>
</feature>
<feature type="turn" evidence="2">
    <location>
        <begin position="331"/>
        <end position="333"/>
    </location>
</feature>
<feature type="helix" evidence="2">
    <location>
        <begin position="340"/>
        <end position="344"/>
    </location>
</feature>
<feature type="turn" evidence="2">
    <location>
        <begin position="347"/>
        <end position="356"/>
    </location>
</feature>
<feature type="strand" evidence="2">
    <location>
        <begin position="361"/>
        <end position="365"/>
    </location>
</feature>
<feature type="strand" evidence="2">
    <location>
        <begin position="368"/>
        <end position="370"/>
    </location>
</feature>
<feature type="strand" evidence="2">
    <location>
        <begin position="372"/>
        <end position="374"/>
    </location>
</feature>
<feature type="strand" evidence="2">
    <location>
        <begin position="378"/>
        <end position="381"/>
    </location>
</feature>
<feature type="helix" evidence="2">
    <location>
        <begin position="383"/>
        <end position="389"/>
    </location>
</feature>
<feature type="helix" evidence="2">
    <location>
        <begin position="391"/>
        <end position="401"/>
    </location>
</feature>
<feature type="helix" evidence="2">
    <location>
        <begin position="407"/>
        <end position="415"/>
    </location>
</feature>
<feature type="helix" evidence="2">
    <location>
        <begin position="423"/>
        <end position="428"/>
    </location>
</feature>
<feature type="turn" evidence="2">
    <location>
        <begin position="429"/>
        <end position="431"/>
    </location>
</feature>
<feature type="strand" evidence="2">
    <location>
        <begin position="434"/>
        <end position="437"/>
    </location>
</feature>
<feature type="helix" evidence="2">
    <location>
        <begin position="444"/>
        <end position="446"/>
    </location>
</feature>
<feature type="strand" evidence="2">
    <location>
        <begin position="447"/>
        <end position="454"/>
    </location>
</feature>
<feature type="strand" evidence="2">
    <location>
        <begin position="456"/>
        <end position="462"/>
    </location>
</feature>
<feature type="turn" evidence="2">
    <location>
        <begin position="464"/>
        <end position="466"/>
    </location>
</feature>
<feature type="helix" evidence="2">
    <location>
        <begin position="467"/>
        <end position="470"/>
    </location>
</feature>
<feature type="strand" evidence="2">
    <location>
        <begin position="480"/>
        <end position="482"/>
    </location>
</feature>
<feature type="helix" evidence="2">
    <location>
        <begin position="487"/>
        <end position="496"/>
    </location>
</feature>
<feature type="helix" evidence="2">
    <location>
        <begin position="499"/>
        <end position="501"/>
    </location>
</feature>
<feature type="helix" evidence="2">
    <location>
        <begin position="517"/>
        <end position="526"/>
    </location>
</feature>
<feature type="turn" evidence="2">
    <location>
        <begin position="534"/>
        <end position="537"/>
    </location>
</feature>
<feature type="helix" evidence="2">
    <location>
        <begin position="543"/>
        <end position="551"/>
    </location>
</feature>
<feature type="strand" evidence="2">
    <location>
        <begin position="561"/>
        <end position="569"/>
    </location>
</feature>
<feature type="strand" evidence="2">
    <location>
        <begin position="572"/>
        <end position="580"/>
    </location>
</feature>
<feature type="helix" evidence="2">
    <location>
        <begin position="584"/>
        <end position="588"/>
    </location>
</feature>
<feature type="helix" evidence="2">
    <location>
        <begin position="605"/>
        <end position="618"/>
    </location>
</feature>
<feature type="helix" evidence="2">
    <location>
        <begin position="620"/>
        <end position="641"/>
    </location>
</feature>
<feature type="helix" evidence="2">
    <location>
        <begin position="647"/>
        <end position="649"/>
    </location>
</feature>
<feature type="helix" evidence="2">
    <location>
        <begin position="654"/>
        <end position="675"/>
    </location>
</feature>
<feature type="helix" evidence="2">
    <location>
        <begin position="681"/>
        <end position="709"/>
    </location>
</feature>
<feature type="helix" evidence="2">
    <location>
        <begin position="716"/>
        <end position="722"/>
    </location>
</feature>
<feature type="helix" evidence="2">
    <location>
        <begin position="729"/>
        <end position="736"/>
    </location>
</feature>
<feature type="strand" evidence="2">
    <location>
        <begin position="747"/>
        <end position="750"/>
    </location>
</feature>
<feature type="turn" evidence="2">
    <location>
        <begin position="764"/>
        <end position="766"/>
    </location>
</feature>
<feature type="helix" evidence="2">
    <location>
        <begin position="770"/>
        <end position="802"/>
    </location>
</feature>
<feature type="strand" evidence="2">
    <location>
        <begin position="821"/>
        <end position="823"/>
    </location>
</feature>
<feature type="strand" evidence="2">
    <location>
        <begin position="826"/>
        <end position="828"/>
    </location>
</feature>
<feature type="strand" evidence="2">
    <location>
        <begin position="831"/>
        <end position="834"/>
    </location>
</feature>
<feature type="helix" evidence="2">
    <location>
        <begin position="836"/>
        <end position="840"/>
    </location>
</feature>
<feature type="strand" evidence="2">
    <location>
        <begin position="845"/>
        <end position="847"/>
    </location>
</feature>
<feature type="strand" evidence="2">
    <location>
        <begin position="852"/>
        <end position="855"/>
    </location>
</feature>
<feature type="helix" evidence="2">
    <location>
        <begin position="867"/>
        <end position="875"/>
    </location>
</feature>
<feature type="strand" evidence="2">
    <location>
        <begin position="881"/>
        <end position="883"/>
    </location>
</feature>
<feature type="turn" evidence="2">
    <location>
        <begin position="886"/>
        <end position="888"/>
    </location>
</feature>
<feature type="helix" evidence="2">
    <location>
        <begin position="897"/>
        <end position="900"/>
    </location>
</feature>
<feature type="strand" evidence="2">
    <location>
        <begin position="904"/>
        <end position="909"/>
    </location>
</feature>
<feature type="helix" evidence="2">
    <location>
        <begin position="917"/>
        <end position="925"/>
    </location>
</feature>
<feature type="helix" evidence="2">
    <location>
        <begin position="926"/>
        <end position="929"/>
    </location>
</feature>
<feature type="helix" evidence="2">
    <location>
        <begin position="1128"/>
        <end position="1135"/>
    </location>
</feature>
<feature type="strand" evidence="2">
    <location>
        <begin position="1160"/>
        <end position="1163"/>
    </location>
</feature>
<feature type="strand" evidence="2">
    <location>
        <begin position="1170"/>
        <end position="1172"/>
    </location>
</feature>
<feature type="strand" evidence="2">
    <location>
        <begin position="1200"/>
        <end position="1202"/>
    </location>
</feature>
<feature type="helix" evidence="2">
    <location>
        <begin position="1206"/>
        <end position="1213"/>
    </location>
</feature>
<feature type="helix" evidence="2">
    <location>
        <begin position="1215"/>
        <end position="1232"/>
    </location>
</feature>
<feature type="helix" evidence="2">
    <location>
        <begin position="1239"/>
        <end position="1249"/>
    </location>
</feature>
<feature type="strand" evidence="2">
    <location>
        <begin position="1253"/>
        <end position="1258"/>
    </location>
</feature>
<feature type="helix" evidence="2">
    <location>
        <begin position="1269"/>
        <end position="1275"/>
    </location>
</feature>
<feature type="turn" evidence="2">
    <location>
        <begin position="1279"/>
        <end position="1286"/>
    </location>
</feature>
<feature type="strand" evidence="2">
    <location>
        <begin position="1289"/>
        <end position="1291"/>
    </location>
</feature>
<feature type="strand" evidence="2">
    <location>
        <begin position="1294"/>
        <end position="1296"/>
    </location>
</feature>
<feature type="turn" evidence="2">
    <location>
        <begin position="1304"/>
        <end position="1309"/>
    </location>
</feature>
<feature type="strand" evidence="2">
    <location>
        <begin position="1312"/>
        <end position="1326"/>
    </location>
</feature>
<feature type="strand" evidence="2">
    <location>
        <begin position="1330"/>
        <end position="1334"/>
    </location>
</feature>
<feature type="helix" evidence="2">
    <location>
        <begin position="1339"/>
        <end position="1344"/>
    </location>
</feature>
<feature type="helix" evidence="2">
    <location>
        <begin position="1349"/>
        <end position="1353"/>
    </location>
</feature>
<feature type="helix" evidence="2">
    <location>
        <begin position="1358"/>
        <end position="1368"/>
    </location>
</feature>
<feature type="helix" evidence="2">
    <location>
        <begin position="1377"/>
        <end position="1383"/>
    </location>
</feature>
<feature type="helix" evidence="2">
    <location>
        <begin position="1390"/>
        <end position="1392"/>
    </location>
</feature>
<feature type="strand" evidence="2">
    <location>
        <begin position="1393"/>
        <end position="1397"/>
    </location>
</feature>
<keyword id="KW-0002">3D-structure</keyword>
<keyword id="KW-0240">DNA-directed RNA polymerase</keyword>
<keyword id="KW-0460">Magnesium</keyword>
<keyword id="KW-0479">Metal-binding</keyword>
<keyword id="KW-0548">Nucleotidyltransferase</keyword>
<keyword id="KW-1185">Reference proteome</keyword>
<keyword id="KW-0804">Transcription</keyword>
<keyword id="KW-0808">Transferase</keyword>
<keyword id="KW-0862">Zinc</keyword>
<dbReference type="EC" id="2.7.7.6" evidence="1"/>
<dbReference type="EMBL" id="AE015924">
    <property type="protein sequence ID" value="AAQ65600.1"/>
    <property type="molecule type" value="Genomic_DNA"/>
</dbReference>
<dbReference type="RefSeq" id="WP_005873811.1">
    <property type="nucleotide sequence ID" value="NC_002950.2"/>
</dbReference>
<dbReference type="PDB" id="8DKC">
    <property type="method" value="EM"/>
    <property type="resolution" value="3.50 A"/>
    <property type="chains" value="D=1-1433"/>
</dbReference>
<dbReference type="PDBsum" id="8DKC"/>
<dbReference type="SMR" id="Q7MX26"/>
<dbReference type="STRING" id="242619.PG_0395"/>
<dbReference type="EnsemblBacteria" id="AAQ65600">
    <property type="protein sequence ID" value="AAQ65600"/>
    <property type="gene ID" value="PG_0395"/>
</dbReference>
<dbReference type="KEGG" id="pgi:PG_0395"/>
<dbReference type="eggNOG" id="COG0086">
    <property type="taxonomic scope" value="Bacteria"/>
</dbReference>
<dbReference type="HOGENOM" id="CLU_000524_3_1_10"/>
<dbReference type="Proteomes" id="UP000000588">
    <property type="component" value="Chromosome"/>
</dbReference>
<dbReference type="GO" id="GO:0000428">
    <property type="term" value="C:DNA-directed RNA polymerase complex"/>
    <property type="evidence" value="ECO:0007669"/>
    <property type="project" value="UniProtKB-KW"/>
</dbReference>
<dbReference type="GO" id="GO:0003677">
    <property type="term" value="F:DNA binding"/>
    <property type="evidence" value="ECO:0007669"/>
    <property type="project" value="UniProtKB-UniRule"/>
</dbReference>
<dbReference type="GO" id="GO:0003899">
    <property type="term" value="F:DNA-directed RNA polymerase activity"/>
    <property type="evidence" value="ECO:0007669"/>
    <property type="project" value="UniProtKB-UniRule"/>
</dbReference>
<dbReference type="GO" id="GO:0000287">
    <property type="term" value="F:magnesium ion binding"/>
    <property type="evidence" value="ECO:0007669"/>
    <property type="project" value="UniProtKB-UniRule"/>
</dbReference>
<dbReference type="GO" id="GO:0008270">
    <property type="term" value="F:zinc ion binding"/>
    <property type="evidence" value="ECO:0007669"/>
    <property type="project" value="UniProtKB-UniRule"/>
</dbReference>
<dbReference type="GO" id="GO:0006351">
    <property type="term" value="P:DNA-templated transcription"/>
    <property type="evidence" value="ECO:0007669"/>
    <property type="project" value="UniProtKB-UniRule"/>
</dbReference>
<dbReference type="CDD" id="cd02655">
    <property type="entry name" value="RNAP_beta'_C"/>
    <property type="match status" value="1"/>
</dbReference>
<dbReference type="CDD" id="cd01609">
    <property type="entry name" value="RNAP_beta'_N"/>
    <property type="match status" value="1"/>
</dbReference>
<dbReference type="Gene3D" id="1.10.132.30">
    <property type="match status" value="1"/>
</dbReference>
<dbReference type="Gene3D" id="1.10.150.390">
    <property type="match status" value="1"/>
</dbReference>
<dbReference type="Gene3D" id="1.10.1790.20">
    <property type="match status" value="1"/>
</dbReference>
<dbReference type="Gene3D" id="1.10.40.90">
    <property type="match status" value="1"/>
</dbReference>
<dbReference type="Gene3D" id="2.40.40.20">
    <property type="match status" value="1"/>
</dbReference>
<dbReference type="Gene3D" id="2.40.50.100">
    <property type="match status" value="3"/>
</dbReference>
<dbReference type="Gene3D" id="4.10.860.120">
    <property type="entry name" value="RNA polymerase II, clamp domain"/>
    <property type="match status" value="1"/>
</dbReference>
<dbReference type="Gene3D" id="1.10.274.100">
    <property type="entry name" value="RNA polymerase Rpb1, domain 3"/>
    <property type="match status" value="1"/>
</dbReference>
<dbReference type="HAMAP" id="MF_01322">
    <property type="entry name" value="RNApol_bact_RpoC"/>
    <property type="match status" value="1"/>
</dbReference>
<dbReference type="InterPro" id="IPR045867">
    <property type="entry name" value="DNA-dir_RpoC_beta_prime"/>
</dbReference>
<dbReference type="InterPro" id="IPR012754">
    <property type="entry name" value="DNA-dir_RpoC_beta_prime_bact"/>
</dbReference>
<dbReference type="InterPro" id="IPR000722">
    <property type="entry name" value="RNA_pol_asu"/>
</dbReference>
<dbReference type="InterPro" id="IPR006592">
    <property type="entry name" value="RNA_pol_N"/>
</dbReference>
<dbReference type="InterPro" id="IPR007080">
    <property type="entry name" value="RNA_pol_Rpb1_1"/>
</dbReference>
<dbReference type="InterPro" id="IPR007066">
    <property type="entry name" value="RNA_pol_Rpb1_3"/>
</dbReference>
<dbReference type="InterPro" id="IPR042102">
    <property type="entry name" value="RNA_pol_Rpb1_3_sf"/>
</dbReference>
<dbReference type="InterPro" id="IPR007083">
    <property type="entry name" value="RNA_pol_Rpb1_4"/>
</dbReference>
<dbReference type="InterPro" id="IPR007081">
    <property type="entry name" value="RNA_pol_Rpb1_5"/>
</dbReference>
<dbReference type="InterPro" id="IPR044893">
    <property type="entry name" value="RNA_pol_Rpb1_clamp_domain"/>
</dbReference>
<dbReference type="InterPro" id="IPR038120">
    <property type="entry name" value="Rpb1_funnel_sf"/>
</dbReference>
<dbReference type="NCBIfam" id="TIGR02386">
    <property type="entry name" value="rpoC_TIGR"/>
    <property type="match status" value="1"/>
</dbReference>
<dbReference type="PANTHER" id="PTHR19376">
    <property type="entry name" value="DNA-DIRECTED RNA POLYMERASE"/>
    <property type="match status" value="1"/>
</dbReference>
<dbReference type="PANTHER" id="PTHR19376:SF54">
    <property type="entry name" value="DNA-DIRECTED RNA POLYMERASE SUBUNIT BETA"/>
    <property type="match status" value="1"/>
</dbReference>
<dbReference type="Pfam" id="PF04997">
    <property type="entry name" value="RNA_pol_Rpb1_1"/>
    <property type="match status" value="1"/>
</dbReference>
<dbReference type="Pfam" id="PF00623">
    <property type="entry name" value="RNA_pol_Rpb1_2"/>
    <property type="match status" value="2"/>
</dbReference>
<dbReference type="Pfam" id="PF04983">
    <property type="entry name" value="RNA_pol_Rpb1_3"/>
    <property type="match status" value="1"/>
</dbReference>
<dbReference type="Pfam" id="PF05000">
    <property type="entry name" value="RNA_pol_Rpb1_4"/>
    <property type="match status" value="1"/>
</dbReference>
<dbReference type="Pfam" id="PF04998">
    <property type="entry name" value="RNA_pol_Rpb1_5"/>
    <property type="match status" value="1"/>
</dbReference>
<dbReference type="SMART" id="SM00663">
    <property type="entry name" value="RPOLA_N"/>
    <property type="match status" value="1"/>
</dbReference>
<dbReference type="SUPFAM" id="SSF64484">
    <property type="entry name" value="beta and beta-prime subunits of DNA dependent RNA-polymerase"/>
    <property type="match status" value="1"/>
</dbReference>
<accession>Q7MX26</accession>
<gene>
    <name evidence="1" type="primary">rpoC</name>
    <name type="ordered locus">PG_0395</name>
</gene>
<sequence>MAFRKENKIKNNFSKIRITLASPEEILENSFGEVLKPETINYRTYKPERDGLFCERIFGPVKDFECHCGKYKRIRYRGIVCDRCGVEVTEKKVRRERMGHIHLVVPVAHIWYFRSLPNKIGYLLGLPTKKLDAIIYYERYVVIQPGVAEGLSQLDLLSEEEYLDKLDEIERTHKGNQNLEDTNPDKFIAKIGAEAIYDLLCRVDLDSISYELRDRANTDGSQQRKTEALKRLQVVESFRASKGVNRPEWMVMKVIPVIPPDLRPLVPLDGGRFATSDLNDLYRRVIIRNNRLKRLIEIKAPEVILRNEKRMLQEAVDSLFDNSRKSSAVKSDNNRPLKSLSDSLKGKQGRFRQNLLGKRVDYSARSVIVVGPELKMHECGLPKDMAAELYKPFIIRKLIERGIVKTVKSAKKIVDRKEPVIWDILEYVMKGHPVLLNRAPTLHRLGIQAFQPKLIEGKAIQLHPLSCTAFNADFDGDQMAVHLPLSNEAILEAQLLMLASHNILNPANGAPITVPSQDMVLGLYYITKLRPNTKGHGLIFYGPEEATIAYNEGKVDIHAPIKVYVEDYENGELVRRMVETSVGRLMVNEYVPKKVGYVNEVLGKKALRDIIGSVIKICGVATTAKFLDDIKNLGYYMAFKGGLSFNLADVLIPDEKDQLIQEGYTAVEQIMQDYSMGFITFNERYNQIIDTWTHINGRLSNVLIKQLSSDNDGFNSVFMMMDSGARGSKEQIRQLSGMRGLMAKPQKSGAEGGQIIENPILSNFKEGLSVLEYFISTHGARKGLADTALKTADAGYLTRRLVDVSHDVIITEEDCGTLRGLLTTELKQNEDVVASLYERILGRVSVHDIIHPTTGDIIVRAGEEIREQAAQIIEDSPIEAVEIRSVLTCESKKGVCAKCYGRNLATNRMVQRGEVVGVIAAQSIGEPGTQLTLRTFHVGGIASNVATENSLLSKYDGILEFEELRAVDVTDESHQVVVSRMTELRIADPNTGIILANHNIPYGAKLFFRQGDAVKKGDKIIEWDPFNAVIVSEVAGTLSFEGVVENVTFKMESDETTGLKEKIIIESKDKTMAPYARIIDENGEMLKNYSLPMGAHVVKDDGDTVKVGEILVKIPRSVGKAGDITGGLPRVTELFEARNPSNPAIVSEIDGEIGFGKLKRGNREITVTSKLGEEKKYLIPLSKQLLVQENDFVRAGTPLSDGAITPADILAIKGPTAVQEYIVNEVQDVYRLQGVKINDKHFEVIVRQMMRKVEIVDPGDTLFLEQQVVDKFEVMEENDRIWGKKVVIDAGDSQVLKAGQIVTARKLRDENSMLKRKDLKIVKVRDAKSATASQILQGITRAALQTKSFMSAASFQETTKVLNEAAICGKTDYLEGLKENVICGHLIPAGTGLRDYEKLVVMHRDDYEKATAERKSFLSVPTAEPAMEEAPSE</sequence>
<reference key="1">
    <citation type="journal article" date="2003" name="J. Bacteriol.">
        <title>Complete genome sequence of the oral pathogenic bacterium Porphyromonas gingivalis strain W83.</title>
        <authorList>
            <person name="Nelson K.E."/>
            <person name="Fleischmann R.D."/>
            <person name="DeBoy R.T."/>
            <person name="Paulsen I.T."/>
            <person name="Fouts D.E."/>
            <person name="Eisen J.A."/>
            <person name="Daugherty S.C."/>
            <person name="Dodson R.J."/>
            <person name="Durkin A.S."/>
            <person name="Gwinn M.L."/>
            <person name="Haft D.H."/>
            <person name="Kolonay J.F."/>
            <person name="Nelson W.C."/>
            <person name="Mason T.M."/>
            <person name="Tallon L."/>
            <person name="Gray J."/>
            <person name="Granger D."/>
            <person name="Tettelin H."/>
            <person name="Dong H."/>
            <person name="Galvin J.L."/>
            <person name="Duncan M.J."/>
            <person name="Dewhirst F.E."/>
            <person name="Fraser C.M."/>
        </authorList>
    </citation>
    <scope>NUCLEOTIDE SEQUENCE [LARGE SCALE GENOMIC DNA]</scope>
    <source>
        <strain>ATCC BAA-308 / W83</strain>
    </source>
</reference>
<evidence type="ECO:0000255" key="1">
    <source>
        <dbReference type="HAMAP-Rule" id="MF_01322"/>
    </source>
</evidence>
<evidence type="ECO:0007829" key="2">
    <source>
        <dbReference type="PDB" id="8DKC"/>
    </source>
</evidence>
<organism>
    <name type="scientific">Porphyromonas gingivalis (strain ATCC BAA-308 / W83)</name>
    <dbReference type="NCBI Taxonomy" id="242619"/>
    <lineage>
        <taxon>Bacteria</taxon>
        <taxon>Pseudomonadati</taxon>
        <taxon>Bacteroidota</taxon>
        <taxon>Bacteroidia</taxon>
        <taxon>Bacteroidales</taxon>
        <taxon>Porphyromonadaceae</taxon>
        <taxon>Porphyromonas</taxon>
    </lineage>
</organism>
<comment type="function">
    <text evidence="1">DNA-dependent RNA polymerase catalyzes the transcription of DNA into RNA using the four ribonucleoside triphosphates as substrates.</text>
</comment>
<comment type="catalytic activity">
    <reaction evidence="1">
        <text>RNA(n) + a ribonucleoside 5'-triphosphate = RNA(n+1) + diphosphate</text>
        <dbReference type="Rhea" id="RHEA:21248"/>
        <dbReference type="Rhea" id="RHEA-COMP:14527"/>
        <dbReference type="Rhea" id="RHEA-COMP:17342"/>
        <dbReference type="ChEBI" id="CHEBI:33019"/>
        <dbReference type="ChEBI" id="CHEBI:61557"/>
        <dbReference type="ChEBI" id="CHEBI:140395"/>
        <dbReference type="EC" id="2.7.7.6"/>
    </reaction>
</comment>
<comment type="cofactor">
    <cofactor evidence="1">
        <name>Mg(2+)</name>
        <dbReference type="ChEBI" id="CHEBI:18420"/>
    </cofactor>
    <text evidence="1">Binds 1 Mg(2+) ion per subunit.</text>
</comment>
<comment type="cofactor">
    <cofactor evidence="1">
        <name>Zn(2+)</name>
        <dbReference type="ChEBI" id="CHEBI:29105"/>
    </cofactor>
    <text evidence="1">Binds 2 Zn(2+) ions per subunit.</text>
</comment>
<comment type="subunit">
    <text evidence="1">The RNAP catalytic core consists of 2 alpha, 1 beta, 1 beta' and 1 omega subunit. When a sigma factor is associated with the core the holoenzyme is formed, which can initiate transcription.</text>
</comment>
<comment type="similarity">
    <text evidence="1">Belongs to the RNA polymerase beta' chain family.</text>
</comment>